<gene>
    <name evidence="1" type="primary">aroB</name>
    <name type="ordered locus">lwe1953</name>
</gene>
<keyword id="KW-0028">Amino-acid biosynthesis</keyword>
<keyword id="KW-0057">Aromatic amino acid biosynthesis</keyword>
<keyword id="KW-0170">Cobalt</keyword>
<keyword id="KW-0963">Cytoplasm</keyword>
<keyword id="KW-0456">Lyase</keyword>
<keyword id="KW-0479">Metal-binding</keyword>
<keyword id="KW-0520">NAD</keyword>
<keyword id="KW-0547">Nucleotide-binding</keyword>
<keyword id="KW-0862">Zinc</keyword>
<accession>A0AK39</accession>
<proteinExistence type="inferred from homology"/>
<organism>
    <name type="scientific">Listeria welshimeri serovar 6b (strain ATCC 35897 / DSM 20650 / CCUG 15529 / CIP 8149 / NCTC 11857 / SLCC 5334 / V8)</name>
    <dbReference type="NCBI Taxonomy" id="386043"/>
    <lineage>
        <taxon>Bacteria</taxon>
        <taxon>Bacillati</taxon>
        <taxon>Bacillota</taxon>
        <taxon>Bacilli</taxon>
        <taxon>Bacillales</taxon>
        <taxon>Listeriaceae</taxon>
        <taxon>Listeria</taxon>
    </lineage>
</organism>
<sequence length="365" mass="41394">MPEITVRAKSKTYPVYINEFALDDVRGKWTESLAKYSHVFVLTDGHVAELHKSKLDEILTDLPVVTYYVAPNGEEAKTFRVYEDVMTKMIESGLDRKAVLIAFGGGVIGDLGGFVASTYMRGIPFYQVPTTVLAHDSAVGGKVAINHPLGKNMIGNFYQPEAVIYDTQFFATLPEREMRSGFAEMIKHALISDYTLLRALMDTFTEPKDFYTKDLTPFLQRGIEIKANIVAQDETEQGVRAYLNFGHTFGHALEAYGNFSKWLHGEAITYGMIYALTMSETIYGLDFNLAEFKTWLRNLGYDTTFDVTVPFSNILENMRHDKKTTFNEISMVLLKEIGKPVIFKAEDELIFETYKRVMRNGEDAF</sequence>
<feature type="chain" id="PRO_1000094543" description="3-dehydroquinate synthase">
    <location>
        <begin position="1"/>
        <end position="365"/>
    </location>
</feature>
<feature type="binding site" evidence="1">
    <location>
        <begin position="106"/>
        <end position="110"/>
    </location>
    <ligand>
        <name>NAD(+)</name>
        <dbReference type="ChEBI" id="CHEBI:57540"/>
    </ligand>
</feature>
<feature type="binding site" evidence="1">
    <location>
        <begin position="130"/>
        <end position="131"/>
    </location>
    <ligand>
        <name>NAD(+)</name>
        <dbReference type="ChEBI" id="CHEBI:57540"/>
    </ligand>
</feature>
<feature type="binding site" evidence="1">
    <location>
        <position position="142"/>
    </location>
    <ligand>
        <name>NAD(+)</name>
        <dbReference type="ChEBI" id="CHEBI:57540"/>
    </ligand>
</feature>
<feature type="binding site" evidence="1">
    <location>
        <position position="151"/>
    </location>
    <ligand>
        <name>NAD(+)</name>
        <dbReference type="ChEBI" id="CHEBI:57540"/>
    </ligand>
</feature>
<feature type="binding site" evidence="1">
    <location>
        <begin position="169"/>
        <end position="172"/>
    </location>
    <ligand>
        <name>NAD(+)</name>
        <dbReference type="ChEBI" id="CHEBI:57540"/>
    </ligand>
</feature>
<feature type="binding site" evidence="1">
    <location>
        <position position="184"/>
    </location>
    <ligand>
        <name>Zn(2+)</name>
        <dbReference type="ChEBI" id="CHEBI:29105"/>
    </ligand>
</feature>
<feature type="binding site" evidence="1">
    <location>
        <position position="247"/>
    </location>
    <ligand>
        <name>Zn(2+)</name>
        <dbReference type="ChEBI" id="CHEBI:29105"/>
    </ligand>
</feature>
<feature type="binding site" evidence="1">
    <location>
        <position position="264"/>
    </location>
    <ligand>
        <name>Zn(2+)</name>
        <dbReference type="ChEBI" id="CHEBI:29105"/>
    </ligand>
</feature>
<comment type="function">
    <text evidence="1">Catalyzes the conversion of 3-deoxy-D-arabino-heptulosonate 7-phosphate (DAHP) to dehydroquinate (DHQ).</text>
</comment>
<comment type="catalytic activity">
    <reaction evidence="1">
        <text>7-phospho-2-dehydro-3-deoxy-D-arabino-heptonate = 3-dehydroquinate + phosphate</text>
        <dbReference type="Rhea" id="RHEA:21968"/>
        <dbReference type="ChEBI" id="CHEBI:32364"/>
        <dbReference type="ChEBI" id="CHEBI:43474"/>
        <dbReference type="ChEBI" id="CHEBI:58394"/>
        <dbReference type="EC" id="4.2.3.4"/>
    </reaction>
</comment>
<comment type="cofactor">
    <cofactor evidence="1">
        <name>Co(2+)</name>
        <dbReference type="ChEBI" id="CHEBI:48828"/>
    </cofactor>
    <cofactor evidence="1">
        <name>Zn(2+)</name>
        <dbReference type="ChEBI" id="CHEBI:29105"/>
    </cofactor>
    <text evidence="1">Binds 1 divalent metal cation per subunit. Can use either Co(2+) or Zn(2+).</text>
</comment>
<comment type="cofactor">
    <cofactor evidence="1">
        <name>NAD(+)</name>
        <dbReference type="ChEBI" id="CHEBI:57540"/>
    </cofactor>
</comment>
<comment type="pathway">
    <text evidence="1">Metabolic intermediate biosynthesis; chorismate biosynthesis; chorismate from D-erythrose 4-phosphate and phosphoenolpyruvate: step 2/7.</text>
</comment>
<comment type="subcellular location">
    <subcellularLocation>
        <location evidence="1">Cytoplasm</location>
    </subcellularLocation>
</comment>
<comment type="similarity">
    <text evidence="1">Belongs to the sugar phosphate cyclases superfamily. Dehydroquinate synthase family.</text>
</comment>
<dbReference type="EC" id="4.2.3.4" evidence="1"/>
<dbReference type="EMBL" id="AM263198">
    <property type="protein sequence ID" value="CAK21371.1"/>
    <property type="molecule type" value="Genomic_DNA"/>
</dbReference>
<dbReference type="RefSeq" id="WP_011702719.1">
    <property type="nucleotide sequence ID" value="NC_008555.1"/>
</dbReference>
<dbReference type="SMR" id="A0AK39"/>
<dbReference type="STRING" id="386043.lwe1953"/>
<dbReference type="GeneID" id="61189853"/>
<dbReference type="KEGG" id="lwe:lwe1953"/>
<dbReference type="eggNOG" id="COG0337">
    <property type="taxonomic scope" value="Bacteria"/>
</dbReference>
<dbReference type="HOGENOM" id="CLU_001201_0_1_9"/>
<dbReference type="OrthoDB" id="9806583at2"/>
<dbReference type="UniPathway" id="UPA00053">
    <property type="reaction ID" value="UER00085"/>
</dbReference>
<dbReference type="Proteomes" id="UP000000779">
    <property type="component" value="Chromosome"/>
</dbReference>
<dbReference type="GO" id="GO:0005737">
    <property type="term" value="C:cytoplasm"/>
    <property type="evidence" value="ECO:0007669"/>
    <property type="project" value="UniProtKB-SubCell"/>
</dbReference>
<dbReference type="GO" id="GO:0003856">
    <property type="term" value="F:3-dehydroquinate synthase activity"/>
    <property type="evidence" value="ECO:0007669"/>
    <property type="project" value="UniProtKB-UniRule"/>
</dbReference>
<dbReference type="GO" id="GO:0046872">
    <property type="term" value="F:metal ion binding"/>
    <property type="evidence" value="ECO:0007669"/>
    <property type="project" value="UniProtKB-KW"/>
</dbReference>
<dbReference type="GO" id="GO:0000166">
    <property type="term" value="F:nucleotide binding"/>
    <property type="evidence" value="ECO:0007669"/>
    <property type="project" value="UniProtKB-KW"/>
</dbReference>
<dbReference type="GO" id="GO:0008652">
    <property type="term" value="P:amino acid biosynthetic process"/>
    <property type="evidence" value="ECO:0007669"/>
    <property type="project" value="UniProtKB-KW"/>
</dbReference>
<dbReference type="GO" id="GO:0009073">
    <property type="term" value="P:aromatic amino acid family biosynthetic process"/>
    <property type="evidence" value="ECO:0007669"/>
    <property type="project" value="UniProtKB-KW"/>
</dbReference>
<dbReference type="GO" id="GO:0009423">
    <property type="term" value="P:chorismate biosynthetic process"/>
    <property type="evidence" value="ECO:0007669"/>
    <property type="project" value="UniProtKB-UniRule"/>
</dbReference>
<dbReference type="CDD" id="cd08195">
    <property type="entry name" value="DHQS"/>
    <property type="match status" value="1"/>
</dbReference>
<dbReference type="FunFam" id="1.20.1090.10:FF:000019">
    <property type="entry name" value="3-dehydroquinate synthase"/>
    <property type="match status" value="1"/>
</dbReference>
<dbReference type="FunFam" id="3.40.50.1970:FF:000007">
    <property type="entry name" value="Pentafunctional AROM polypeptide"/>
    <property type="match status" value="1"/>
</dbReference>
<dbReference type="Gene3D" id="3.40.50.1970">
    <property type="match status" value="1"/>
</dbReference>
<dbReference type="Gene3D" id="1.20.1090.10">
    <property type="entry name" value="Dehydroquinate synthase-like - alpha domain"/>
    <property type="match status" value="1"/>
</dbReference>
<dbReference type="HAMAP" id="MF_00110">
    <property type="entry name" value="DHQ_synthase"/>
    <property type="match status" value="1"/>
</dbReference>
<dbReference type="InterPro" id="IPR050071">
    <property type="entry name" value="Dehydroquinate_synthase"/>
</dbReference>
<dbReference type="InterPro" id="IPR016037">
    <property type="entry name" value="DHQ_synth_AroB"/>
</dbReference>
<dbReference type="InterPro" id="IPR030963">
    <property type="entry name" value="DHQ_synth_fam"/>
</dbReference>
<dbReference type="InterPro" id="IPR030960">
    <property type="entry name" value="DHQS/DOIS_N"/>
</dbReference>
<dbReference type="InterPro" id="IPR056179">
    <property type="entry name" value="DHQS_C"/>
</dbReference>
<dbReference type="NCBIfam" id="TIGR01357">
    <property type="entry name" value="aroB"/>
    <property type="match status" value="1"/>
</dbReference>
<dbReference type="PANTHER" id="PTHR43622">
    <property type="entry name" value="3-DEHYDROQUINATE SYNTHASE"/>
    <property type="match status" value="1"/>
</dbReference>
<dbReference type="PANTHER" id="PTHR43622:SF7">
    <property type="entry name" value="3-DEHYDROQUINATE SYNTHASE, CHLOROPLASTIC"/>
    <property type="match status" value="1"/>
</dbReference>
<dbReference type="Pfam" id="PF01761">
    <property type="entry name" value="DHQ_synthase"/>
    <property type="match status" value="1"/>
</dbReference>
<dbReference type="Pfam" id="PF24621">
    <property type="entry name" value="DHQS_C"/>
    <property type="match status" value="1"/>
</dbReference>
<dbReference type="PIRSF" id="PIRSF001455">
    <property type="entry name" value="DHQ_synth"/>
    <property type="match status" value="1"/>
</dbReference>
<dbReference type="SUPFAM" id="SSF56796">
    <property type="entry name" value="Dehydroquinate synthase-like"/>
    <property type="match status" value="1"/>
</dbReference>
<name>AROB_LISW6</name>
<reference key="1">
    <citation type="journal article" date="2006" name="J. Bacteriol.">
        <title>Whole-genome sequence of Listeria welshimeri reveals common steps in genome reduction with Listeria innocua as compared to Listeria monocytogenes.</title>
        <authorList>
            <person name="Hain T."/>
            <person name="Steinweg C."/>
            <person name="Kuenne C.T."/>
            <person name="Billion A."/>
            <person name="Ghai R."/>
            <person name="Chatterjee S.S."/>
            <person name="Domann E."/>
            <person name="Kaerst U."/>
            <person name="Goesmann A."/>
            <person name="Bekel T."/>
            <person name="Bartels D."/>
            <person name="Kaiser O."/>
            <person name="Meyer F."/>
            <person name="Puehler A."/>
            <person name="Weisshaar B."/>
            <person name="Wehland J."/>
            <person name="Liang C."/>
            <person name="Dandekar T."/>
            <person name="Lampidis R."/>
            <person name="Kreft J."/>
            <person name="Goebel W."/>
            <person name="Chakraborty T."/>
        </authorList>
    </citation>
    <scope>NUCLEOTIDE SEQUENCE [LARGE SCALE GENOMIC DNA]</scope>
    <source>
        <strain>ATCC 35897 / DSM 20650 / CCUG 15529 / CIP 8149 / NCTC 11857 / SLCC 5334 / V8</strain>
    </source>
</reference>
<protein>
    <recommendedName>
        <fullName evidence="1">3-dehydroquinate synthase</fullName>
        <shortName evidence="1">DHQS</shortName>
        <ecNumber evidence="1">4.2.3.4</ecNumber>
    </recommendedName>
</protein>
<evidence type="ECO:0000255" key="1">
    <source>
        <dbReference type="HAMAP-Rule" id="MF_00110"/>
    </source>
</evidence>